<comment type="function">
    <text evidence="1">NDH-1 shuttles electrons from NADH, via FMN and iron-sulfur (Fe-S) centers, to quinones in the respiratory chain. The immediate electron acceptor for the enzyme in this species is believed to be ubiquinone. Couples the redox reaction to proton translocation (for every two electrons transferred, four hydrogen ions are translocated across the cytoplasmic membrane), and thus conserves the redox energy in a proton gradient. This subunit may bind ubiquinone.</text>
</comment>
<comment type="catalytic activity">
    <reaction evidence="1">
        <text>a quinone + NADH + 5 H(+)(in) = a quinol + NAD(+) + 4 H(+)(out)</text>
        <dbReference type="Rhea" id="RHEA:57888"/>
        <dbReference type="ChEBI" id="CHEBI:15378"/>
        <dbReference type="ChEBI" id="CHEBI:24646"/>
        <dbReference type="ChEBI" id="CHEBI:57540"/>
        <dbReference type="ChEBI" id="CHEBI:57945"/>
        <dbReference type="ChEBI" id="CHEBI:132124"/>
    </reaction>
</comment>
<comment type="subunit">
    <text evidence="1">NDH-1 is composed of 14 different subunits. Subunits NuoA, H, J, K, L, M, N constitute the membrane sector of the complex.</text>
</comment>
<comment type="subcellular location">
    <subcellularLocation>
        <location evidence="1">Cell inner membrane</location>
        <topology evidence="1">Multi-pass membrane protein</topology>
    </subcellularLocation>
</comment>
<comment type="similarity">
    <text evidence="1">Belongs to the complex I subunit 1 family.</text>
</comment>
<gene>
    <name evidence="1" type="primary">nuoH</name>
    <name type="ordered locus">Ccur92_01510</name>
    <name type="ORF">CCV52592_1522</name>
</gene>
<proteinExistence type="inferred from homology"/>
<name>NUOH_CAMC5</name>
<organism>
    <name type="scientific">Campylobacter curvus (strain 525.92)</name>
    <dbReference type="NCBI Taxonomy" id="360105"/>
    <lineage>
        <taxon>Bacteria</taxon>
        <taxon>Pseudomonadati</taxon>
        <taxon>Campylobacterota</taxon>
        <taxon>Epsilonproteobacteria</taxon>
        <taxon>Campylobacterales</taxon>
        <taxon>Campylobacteraceae</taxon>
        <taxon>Campylobacter</taxon>
    </lineage>
</organism>
<dbReference type="EC" id="7.1.1.-" evidence="1"/>
<dbReference type="EMBL" id="CP000767">
    <property type="protein sequence ID" value="EAU00617.1"/>
    <property type="molecule type" value="Genomic_DNA"/>
</dbReference>
<dbReference type="RefSeq" id="WP_011991725.1">
    <property type="nucleotide sequence ID" value="NC_009715.2"/>
</dbReference>
<dbReference type="SMR" id="A7GW63"/>
<dbReference type="STRING" id="360105.CCV52592_1522"/>
<dbReference type="KEGG" id="ccv:CCV52592_1522"/>
<dbReference type="HOGENOM" id="CLU_015134_0_1_7"/>
<dbReference type="OrthoDB" id="9803734at2"/>
<dbReference type="Proteomes" id="UP000006380">
    <property type="component" value="Chromosome"/>
</dbReference>
<dbReference type="GO" id="GO:0005886">
    <property type="term" value="C:plasma membrane"/>
    <property type="evidence" value="ECO:0007669"/>
    <property type="project" value="UniProtKB-SubCell"/>
</dbReference>
<dbReference type="GO" id="GO:0003954">
    <property type="term" value="F:NADH dehydrogenase activity"/>
    <property type="evidence" value="ECO:0007669"/>
    <property type="project" value="TreeGrafter"/>
</dbReference>
<dbReference type="GO" id="GO:0016655">
    <property type="term" value="F:oxidoreductase activity, acting on NAD(P)H, quinone or similar compound as acceptor"/>
    <property type="evidence" value="ECO:0007669"/>
    <property type="project" value="UniProtKB-UniRule"/>
</dbReference>
<dbReference type="GO" id="GO:0048038">
    <property type="term" value="F:quinone binding"/>
    <property type="evidence" value="ECO:0007669"/>
    <property type="project" value="UniProtKB-KW"/>
</dbReference>
<dbReference type="GO" id="GO:0009060">
    <property type="term" value="P:aerobic respiration"/>
    <property type="evidence" value="ECO:0007669"/>
    <property type="project" value="TreeGrafter"/>
</dbReference>
<dbReference type="HAMAP" id="MF_01350">
    <property type="entry name" value="NDH1_NuoH"/>
    <property type="match status" value="1"/>
</dbReference>
<dbReference type="InterPro" id="IPR001694">
    <property type="entry name" value="NADH_UbQ_OxRdtase_su1/FPO"/>
</dbReference>
<dbReference type="InterPro" id="IPR018086">
    <property type="entry name" value="NADH_UbQ_OxRdtase_su1_CS"/>
</dbReference>
<dbReference type="NCBIfam" id="NF004741">
    <property type="entry name" value="PRK06076.1-2"/>
    <property type="match status" value="1"/>
</dbReference>
<dbReference type="PANTHER" id="PTHR11432">
    <property type="entry name" value="NADH DEHYDROGENASE SUBUNIT 1"/>
    <property type="match status" value="1"/>
</dbReference>
<dbReference type="PANTHER" id="PTHR11432:SF3">
    <property type="entry name" value="NADH-UBIQUINONE OXIDOREDUCTASE CHAIN 1"/>
    <property type="match status" value="1"/>
</dbReference>
<dbReference type="Pfam" id="PF00146">
    <property type="entry name" value="NADHdh"/>
    <property type="match status" value="1"/>
</dbReference>
<dbReference type="PROSITE" id="PS00667">
    <property type="entry name" value="COMPLEX1_ND1_1"/>
    <property type="match status" value="1"/>
</dbReference>
<protein>
    <recommendedName>
        <fullName evidence="1">NADH-quinone oxidoreductase subunit H</fullName>
        <ecNumber evidence="1">7.1.1.-</ecNumber>
    </recommendedName>
    <alternativeName>
        <fullName evidence="1">NADH dehydrogenase I subunit H</fullName>
    </alternativeName>
    <alternativeName>
        <fullName evidence="1">NDH-1 subunit H</fullName>
    </alternativeName>
</protein>
<evidence type="ECO:0000255" key="1">
    <source>
        <dbReference type="HAMAP-Rule" id="MF_01350"/>
    </source>
</evidence>
<keyword id="KW-0997">Cell inner membrane</keyword>
<keyword id="KW-1003">Cell membrane</keyword>
<keyword id="KW-0472">Membrane</keyword>
<keyword id="KW-0520">NAD</keyword>
<keyword id="KW-0874">Quinone</keyword>
<keyword id="KW-1185">Reference proteome</keyword>
<keyword id="KW-1278">Translocase</keyword>
<keyword id="KW-0812">Transmembrane</keyword>
<keyword id="KW-1133">Transmembrane helix</keyword>
<keyword id="KW-0830">Ubiquinone</keyword>
<feature type="chain" id="PRO_1000067737" description="NADH-quinone oxidoreductase subunit H">
    <location>
        <begin position="1"/>
        <end position="330"/>
    </location>
</feature>
<feature type="transmembrane region" description="Helical" evidence="1">
    <location>
        <begin position="5"/>
        <end position="25"/>
    </location>
</feature>
<feature type="transmembrane region" description="Helical" evidence="1">
    <location>
        <begin position="44"/>
        <end position="64"/>
    </location>
</feature>
<feature type="transmembrane region" description="Helical" evidence="1">
    <location>
        <begin position="78"/>
        <end position="98"/>
    </location>
</feature>
<feature type="transmembrane region" description="Helical" evidence="1">
    <location>
        <begin position="122"/>
        <end position="142"/>
    </location>
</feature>
<feature type="transmembrane region" description="Helical" evidence="1">
    <location>
        <begin position="156"/>
        <end position="176"/>
    </location>
</feature>
<feature type="transmembrane region" description="Helical" evidence="1">
    <location>
        <begin position="192"/>
        <end position="212"/>
    </location>
</feature>
<feature type="transmembrane region" description="Helical" evidence="1">
    <location>
        <begin position="240"/>
        <end position="260"/>
    </location>
</feature>
<feature type="transmembrane region" description="Helical" evidence="1">
    <location>
        <begin position="271"/>
        <end position="293"/>
    </location>
</feature>
<feature type="transmembrane region" description="Helical" evidence="1">
    <location>
        <begin position="310"/>
        <end position="330"/>
    </location>
</feature>
<reference key="1">
    <citation type="submission" date="2007-07" db="EMBL/GenBank/DDBJ databases">
        <title>Genome sequence of Campylobacter curvus 525.92 isolated from human feces.</title>
        <authorList>
            <person name="Fouts D.E."/>
            <person name="Mongodin E.F."/>
            <person name="Puiu D."/>
            <person name="Sebastian Y."/>
            <person name="Miller W.G."/>
            <person name="Mandrell R.E."/>
            <person name="Lastovica A.J."/>
            <person name="Nelson K.E."/>
        </authorList>
    </citation>
    <scope>NUCLEOTIDE SEQUENCE [LARGE SCALE GENOMIC DNA]</scope>
    <source>
        <strain>525.92</strain>
    </source>
</reference>
<accession>A7GW63</accession>
<sequence length="330" mass="36255">MSEGLFFIIETFIKAVVILAVIACLAGLATYAERKVLAYMQRRIGPDMVGPVGVLQIVADMIKLFTKEDIVPANANRFIFLIAPLISAIAAFAALAPIPFLPEFELFGHTIRPILADINVGVLYVMGVASVCVFSPLMAGLASYNKFALIAAARAVMGLISFEVVSGLALLSVIMITGSLSLIDINNYQKGIFGWFVFKQPLAFVLFLMASFVECNRTPFCLTENETEIVAGYGTEYSGMRWAMFFIGEYANMIASSIVITLIFLGGFNSFWFVPGGLMMIFKASCVFFFFLWTRAAWPHLRPDQLMALCWKILLPLALVNVLITGIALI</sequence>